<dbReference type="EC" id="5.3.1.16" evidence="1"/>
<dbReference type="EMBL" id="CP000038">
    <property type="protein sequence ID" value="AAZ88751.1"/>
    <property type="molecule type" value="Genomic_DNA"/>
</dbReference>
<dbReference type="SMR" id="Q3Z0G1"/>
<dbReference type="KEGG" id="ssn:SSON_2095"/>
<dbReference type="HOGENOM" id="CLU_048577_1_2_6"/>
<dbReference type="UniPathway" id="UPA00031">
    <property type="reaction ID" value="UER00009"/>
</dbReference>
<dbReference type="Proteomes" id="UP000002529">
    <property type="component" value="Chromosome"/>
</dbReference>
<dbReference type="GO" id="GO:0005737">
    <property type="term" value="C:cytoplasm"/>
    <property type="evidence" value="ECO:0007669"/>
    <property type="project" value="UniProtKB-SubCell"/>
</dbReference>
<dbReference type="GO" id="GO:0003949">
    <property type="term" value="F:1-(5-phosphoribosyl)-5-[(5-phosphoribosylamino)methylideneamino]imidazole-4-carboxamide isomerase activity"/>
    <property type="evidence" value="ECO:0007669"/>
    <property type="project" value="UniProtKB-UniRule"/>
</dbReference>
<dbReference type="GO" id="GO:0000105">
    <property type="term" value="P:L-histidine biosynthetic process"/>
    <property type="evidence" value="ECO:0007669"/>
    <property type="project" value="UniProtKB-UniRule"/>
</dbReference>
<dbReference type="GO" id="GO:0000162">
    <property type="term" value="P:L-tryptophan biosynthetic process"/>
    <property type="evidence" value="ECO:0007669"/>
    <property type="project" value="TreeGrafter"/>
</dbReference>
<dbReference type="CDD" id="cd04732">
    <property type="entry name" value="HisA"/>
    <property type="match status" value="1"/>
</dbReference>
<dbReference type="FunFam" id="3.20.20.70:FF:000009">
    <property type="entry name" value="1-(5-phosphoribosyl)-5-[(5-phosphoribosylamino)methylideneamino] imidazole-4-carboxamide isomerase"/>
    <property type="match status" value="1"/>
</dbReference>
<dbReference type="Gene3D" id="3.20.20.70">
    <property type="entry name" value="Aldolase class I"/>
    <property type="match status" value="1"/>
</dbReference>
<dbReference type="HAMAP" id="MF_01014">
    <property type="entry name" value="HisA"/>
    <property type="match status" value="1"/>
</dbReference>
<dbReference type="InterPro" id="IPR013785">
    <property type="entry name" value="Aldolase_TIM"/>
</dbReference>
<dbReference type="InterPro" id="IPR006062">
    <property type="entry name" value="His_biosynth"/>
</dbReference>
<dbReference type="InterPro" id="IPR006063">
    <property type="entry name" value="HisA_bact_arch"/>
</dbReference>
<dbReference type="InterPro" id="IPR044524">
    <property type="entry name" value="Isoase_HisA-like"/>
</dbReference>
<dbReference type="InterPro" id="IPR023016">
    <property type="entry name" value="Isoase_HisA-like_bact"/>
</dbReference>
<dbReference type="InterPro" id="IPR011060">
    <property type="entry name" value="RibuloseP-bd_barrel"/>
</dbReference>
<dbReference type="NCBIfam" id="TIGR00007">
    <property type="entry name" value="1-(5-phosphoribosyl)-5-[(5-phosphoribosylamino)methylideneamino]imidazole-4-carboxamide isomerase"/>
    <property type="match status" value="1"/>
</dbReference>
<dbReference type="PANTHER" id="PTHR43090">
    <property type="entry name" value="1-(5-PHOSPHORIBOSYL)-5-[(5-PHOSPHORIBOSYLAMINO)METHYLIDENEAMINO] IMIDAZOLE-4-CARBOXAMIDE ISOMERASE"/>
    <property type="match status" value="1"/>
</dbReference>
<dbReference type="PANTHER" id="PTHR43090:SF2">
    <property type="entry name" value="1-(5-PHOSPHORIBOSYL)-5-[(5-PHOSPHORIBOSYLAMINO)METHYLIDENEAMINO] IMIDAZOLE-4-CARBOXAMIDE ISOMERASE"/>
    <property type="match status" value="1"/>
</dbReference>
<dbReference type="Pfam" id="PF00977">
    <property type="entry name" value="His_biosynth"/>
    <property type="match status" value="1"/>
</dbReference>
<dbReference type="SUPFAM" id="SSF51366">
    <property type="entry name" value="Ribulose-phoshate binding barrel"/>
    <property type="match status" value="1"/>
</dbReference>
<proteinExistence type="inferred from homology"/>
<feature type="chain" id="PRO_0000229083" description="1-(5-phosphoribosyl)-5-[(5-phosphoribosylamino)methylideneamino] imidazole-4-carboxamide isomerase">
    <location>
        <begin position="1"/>
        <end position="246"/>
    </location>
</feature>
<feature type="active site" description="Proton acceptor" evidence="1">
    <location>
        <position position="8"/>
    </location>
</feature>
<feature type="active site" description="Proton donor" evidence="1">
    <location>
        <position position="130"/>
    </location>
</feature>
<protein>
    <recommendedName>
        <fullName evidence="1">1-(5-phosphoribosyl)-5-[(5-phosphoribosylamino)methylideneamino] imidazole-4-carboxamide isomerase</fullName>
        <ecNumber evidence="1">5.3.1.16</ecNumber>
    </recommendedName>
    <alternativeName>
        <fullName evidence="1">Phosphoribosylformimino-5-aminoimidazole carboxamide ribotide isomerase</fullName>
    </alternativeName>
</protein>
<evidence type="ECO:0000255" key="1">
    <source>
        <dbReference type="HAMAP-Rule" id="MF_01014"/>
    </source>
</evidence>
<reference key="1">
    <citation type="journal article" date="2005" name="Nucleic Acids Res.">
        <title>Genome dynamics and diversity of Shigella species, the etiologic agents of bacillary dysentery.</title>
        <authorList>
            <person name="Yang F."/>
            <person name="Yang J."/>
            <person name="Zhang X."/>
            <person name="Chen L."/>
            <person name="Jiang Y."/>
            <person name="Yan Y."/>
            <person name="Tang X."/>
            <person name="Wang J."/>
            <person name="Xiong Z."/>
            <person name="Dong J."/>
            <person name="Xue Y."/>
            <person name="Zhu Y."/>
            <person name="Xu X."/>
            <person name="Sun L."/>
            <person name="Chen S."/>
            <person name="Nie H."/>
            <person name="Peng J."/>
            <person name="Xu J."/>
            <person name="Wang Y."/>
            <person name="Yuan Z."/>
            <person name="Wen Y."/>
            <person name="Yao Z."/>
            <person name="Shen Y."/>
            <person name="Qiang B."/>
            <person name="Hou Y."/>
            <person name="Yu J."/>
            <person name="Jin Q."/>
        </authorList>
    </citation>
    <scope>NUCLEOTIDE SEQUENCE [LARGE SCALE GENOMIC DNA]</scope>
    <source>
        <strain>Ss046</strain>
    </source>
</reference>
<name>HIS4_SHISS</name>
<keyword id="KW-0028">Amino-acid biosynthesis</keyword>
<keyword id="KW-0963">Cytoplasm</keyword>
<keyword id="KW-0368">Histidine biosynthesis</keyword>
<keyword id="KW-0413">Isomerase</keyword>
<keyword id="KW-1185">Reference proteome</keyword>
<comment type="catalytic activity">
    <reaction evidence="1">
        <text>1-(5-phospho-beta-D-ribosyl)-5-[(5-phospho-beta-D-ribosylamino)methylideneamino]imidazole-4-carboxamide = 5-[(5-phospho-1-deoxy-D-ribulos-1-ylimino)methylamino]-1-(5-phospho-beta-D-ribosyl)imidazole-4-carboxamide</text>
        <dbReference type="Rhea" id="RHEA:15469"/>
        <dbReference type="ChEBI" id="CHEBI:58435"/>
        <dbReference type="ChEBI" id="CHEBI:58525"/>
        <dbReference type="EC" id="5.3.1.16"/>
    </reaction>
</comment>
<comment type="pathway">
    <text evidence="1">Amino-acid biosynthesis; L-histidine biosynthesis; L-histidine from 5-phospho-alpha-D-ribose 1-diphosphate: step 4/9.</text>
</comment>
<comment type="subcellular location">
    <subcellularLocation>
        <location evidence="1">Cytoplasm</location>
    </subcellularLocation>
</comment>
<comment type="similarity">
    <text evidence="1">Belongs to the HisA/HisF family.</text>
</comment>
<gene>
    <name evidence="1" type="primary">hisA</name>
    <name type="ordered locus">SSON_2095</name>
</gene>
<accession>Q3Z0G1</accession>
<sequence length="246" mass="26171">MMIIPALDLIDGTVVRLHQGDYGKQRDYGNDPLPRLQDYAAQGAEVLHLVDLTGAKDPAKRQIPLIKTLVAGVNVPVQVGGGVRSEEDVAALLEAGVARVVVGSTAVKSPERVKGWFERFGADALVLALDVRIDEQGNKQVAVSGWQENSGVSLEQLVETYLPVGLKHVLCTDISRDGTLAGSNVSLYEEVCARYPQVAFQSSGGIGDINDVAALRGTGVRGVIVGRALLEGKFTVKEAIACWQNA</sequence>
<organism>
    <name type="scientific">Shigella sonnei (strain Ss046)</name>
    <dbReference type="NCBI Taxonomy" id="300269"/>
    <lineage>
        <taxon>Bacteria</taxon>
        <taxon>Pseudomonadati</taxon>
        <taxon>Pseudomonadota</taxon>
        <taxon>Gammaproteobacteria</taxon>
        <taxon>Enterobacterales</taxon>
        <taxon>Enterobacteriaceae</taxon>
        <taxon>Shigella</taxon>
    </lineage>
</organism>